<reference key="1">
    <citation type="journal article" date="2009" name="Appl. Environ. Microbiol.">
        <title>Genome analysis of the meat starter culture bacterium Staphylococcus carnosus TM300.</title>
        <authorList>
            <person name="Rosenstein R."/>
            <person name="Nerz C."/>
            <person name="Biswas L."/>
            <person name="Resch A."/>
            <person name="Raddatz G."/>
            <person name="Schuster S.C."/>
            <person name="Goetz F."/>
        </authorList>
    </citation>
    <scope>NUCLEOTIDE SEQUENCE [LARGE SCALE GENOMIC DNA]</scope>
    <source>
        <strain>TM300</strain>
    </source>
</reference>
<keyword id="KW-0119">Carbohydrate metabolism</keyword>
<keyword id="KW-0963">Cytoplasm</keyword>
<keyword id="KW-0413">Isomerase</keyword>
<keyword id="KW-1185">Reference proteome</keyword>
<organism>
    <name type="scientific">Staphylococcus carnosus (strain TM300)</name>
    <dbReference type="NCBI Taxonomy" id="396513"/>
    <lineage>
        <taxon>Bacteria</taxon>
        <taxon>Bacillati</taxon>
        <taxon>Bacillota</taxon>
        <taxon>Bacilli</taxon>
        <taxon>Bacillales</taxon>
        <taxon>Staphylococcaceae</taxon>
        <taxon>Staphylococcus</taxon>
    </lineage>
</organism>
<comment type="function">
    <text evidence="1">Catalyzes the interconversion of beta-pyran and beta-furan forms of D-ribose.</text>
</comment>
<comment type="catalytic activity">
    <reaction evidence="1">
        <text>beta-D-ribopyranose = beta-D-ribofuranose</text>
        <dbReference type="Rhea" id="RHEA:25432"/>
        <dbReference type="ChEBI" id="CHEBI:27476"/>
        <dbReference type="ChEBI" id="CHEBI:47002"/>
        <dbReference type="EC" id="5.4.99.62"/>
    </reaction>
</comment>
<comment type="pathway">
    <text evidence="1">Carbohydrate metabolism; D-ribose degradation; D-ribose 5-phosphate from beta-D-ribopyranose: step 1/2.</text>
</comment>
<comment type="subunit">
    <text evidence="1">Homodecamer.</text>
</comment>
<comment type="subcellular location">
    <subcellularLocation>
        <location evidence="1">Cytoplasm</location>
    </subcellularLocation>
</comment>
<comment type="similarity">
    <text evidence="1">Belongs to the RbsD / FucU family. RbsD subfamily.</text>
</comment>
<protein>
    <recommendedName>
        <fullName evidence="1">D-ribose pyranase</fullName>
        <ecNumber evidence="1">5.4.99.62</ecNumber>
    </recommendedName>
</protein>
<accession>B9DIF1</accession>
<evidence type="ECO:0000255" key="1">
    <source>
        <dbReference type="HAMAP-Rule" id="MF_01661"/>
    </source>
</evidence>
<sequence length="134" mass="15095">MKKTPLLNSQVSQAVATIGHFDLLTINDAGMPIPNDERRIDLAVTKALPRFIDVLETVVTEMEIQKIYLAEEIKMHNPDQLKAIKGLIAEDVEIEFIPHSQMKEYLSHPLNKGNVRTGEITPFSNIILESNVTF</sequence>
<proteinExistence type="inferred from homology"/>
<feature type="chain" id="PRO_1000187168" description="D-ribose pyranase">
    <location>
        <begin position="1"/>
        <end position="134"/>
    </location>
</feature>
<feature type="active site" description="Proton donor" evidence="1">
    <location>
        <position position="20"/>
    </location>
</feature>
<feature type="binding site" evidence="1">
    <location>
        <position position="28"/>
    </location>
    <ligand>
        <name>substrate</name>
    </ligand>
</feature>
<feature type="binding site" evidence="1">
    <location>
        <position position="99"/>
    </location>
    <ligand>
        <name>substrate</name>
    </ligand>
</feature>
<feature type="binding site" evidence="1">
    <location>
        <begin position="123"/>
        <end position="125"/>
    </location>
    <ligand>
        <name>substrate</name>
    </ligand>
</feature>
<dbReference type="EC" id="5.4.99.62" evidence="1"/>
<dbReference type="EMBL" id="AM295250">
    <property type="protein sequence ID" value="CAL29323.1"/>
    <property type="molecule type" value="Genomic_DNA"/>
</dbReference>
<dbReference type="RefSeq" id="WP_015901658.1">
    <property type="nucleotide sequence ID" value="NC_012121.1"/>
</dbReference>
<dbReference type="SMR" id="B9DIF1"/>
<dbReference type="GeneID" id="93794861"/>
<dbReference type="KEGG" id="sca:SCA_2420"/>
<dbReference type="eggNOG" id="COG1869">
    <property type="taxonomic scope" value="Bacteria"/>
</dbReference>
<dbReference type="HOGENOM" id="CLU_135498_0_0_9"/>
<dbReference type="OrthoDB" id="9805009at2"/>
<dbReference type="BioCyc" id="SCAR396513:SCA_RS12160-MONOMER"/>
<dbReference type="UniPathway" id="UPA00916">
    <property type="reaction ID" value="UER00888"/>
</dbReference>
<dbReference type="Proteomes" id="UP000000444">
    <property type="component" value="Chromosome"/>
</dbReference>
<dbReference type="GO" id="GO:0005829">
    <property type="term" value="C:cytosol"/>
    <property type="evidence" value="ECO:0007669"/>
    <property type="project" value="TreeGrafter"/>
</dbReference>
<dbReference type="GO" id="GO:0062193">
    <property type="term" value="F:D-ribose pyranase activity"/>
    <property type="evidence" value="ECO:0007669"/>
    <property type="project" value="UniProtKB-EC"/>
</dbReference>
<dbReference type="GO" id="GO:0016872">
    <property type="term" value="F:intramolecular lyase activity"/>
    <property type="evidence" value="ECO:0007669"/>
    <property type="project" value="UniProtKB-UniRule"/>
</dbReference>
<dbReference type="GO" id="GO:0048029">
    <property type="term" value="F:monosaccharide binding"/>
    <property type="evidence" value="ECO:0007669"/>
    <property type="project" value="InterPro"/>
</dbReference>
<dbReference type="GO" id="GO:0019303">
    <property type="term" value="P:D-ribose catabolic process"/>
    <property type="evidence" value="ECO:0007669"/>
    <property type="project" value="UniProtKB-UniRule"/>
</dbReference>
<dbReference type="FunFam" id="3.40.1650.10:FF:000004">
    <property type="entry name" value="D-ribose pyranase"/>
    <property type="match status" value="1"/>
</dbReference>
<dbReference type="Gene3D" id="3.40.1650.10">
    <property type="entry name" value="RbsD-like domain"/>
    <property type="match status" value="1"/>
</dbReference>
<dbReference type="HAMAP" id="MF_01661">
    <property type="entry name" value="D_rib_pyranase"/>
    <property type="match status" value="1"/>
</dbReference>
<dbReference type="InterPro" id="IPR023064">
    <property type="entry name" value="D-ribose_pyranase"/>
</dbReference>
<dbReference type="InterPro" id="IPR023750">
    <property type="entry name" value="RbsD-like_sf"/>
</dbReference>
<dbReference type="InterPro" id="IPR007721">
    <property type="entry name" value="RbsD_FucU"/>
</dbReference>
<dbReference type="NCBIfam" id="NF008761">
    <property type="entry name" value="PRK11797.1"/>
    <property type="match status" value="1"/>
</dbReference>
<dbReference type="PANTHER" id="PTHR37831">
    <property type="entry name" value="D-RIBOSE PYRANASE"/>
    <property type="match status" value="1"/>
</dbReference>
<dbReference type="PANTHER" id="PTHR37831:SF1">
    <property type="entry name" value="D-RIBOSE PYRANASE"/>
    <property type="match status" value="1"/>
</dbReference>
<dbReference type="Pfam" id="PF05025">
    <property type="entry name" value="RbsD_FucU"/>
    <property type="match status" value="1"/>
</dbReference>
<dbReference type="SUPFAM" id="SSF102546">
    <property type="entry name" value="RbsD-like"/>
    <property type="match status" value="1"/>
</dbReference>
<gene>
    <name evidence="1" type="primary">rbsD</name>
    <name type="ordered locus">Sca_2420</name>
</gene>
<name>RBSD_STACT</name>